<comment type="function">
    <text evidence="1 3">TAFs are components of the transcription factor IID (TFIID) complex that is essential for mediating regulation of RNA polymerase transcription. Required for the expression of a subset of ethylene-responsive genes (By similarity). Involved in the negative regulation of cytokinin sensitivity.</text>
</comment>
<comment type="subunit">
    <text evidence="1 4">Component of the TFIID complex. TFIID is composed of TATA binding protein (TBP) and a number of TBP-associated factors (TAFs) whose MWs range from 14-217 kDa. Can homodimerize. Interacts with PP2A1, PP2A5, ERF1B, EIN3, TAF4, TAF4B, TAF5, TAF8, TAF10, TAF11, TAF12, TAF13, TAF14, TAF14B, TAF15 and TAF15B (By similarity). Interacts with PKL.</text>
</comment>
<comment type="subcellular location">
    <subcellularLocation>
        <location evidence="3">Nucleus</location>
    </subcellularLocation>
</comment>
<comment type="tissue specificity">
    <text evidence="3">Expressed in roots.</text>
</comment>
<comment type="induction">
    <text evidence="3">Not up-regulated by cytokinins.</text>
</comment>
<comment type="disruption phenotype">
    <text evidence="3">Hypersensitivity to cytokinins.</text>
</comment>
<comment type="similarity">
    <text evidence="5">Belongs to the TAF12 family.</text>
</comment>
<comment type="caution">
    <text evidence="5">TAF12B in cv. Columbia (AC Q940A7) is 2 amino acids longer.</text>
</comment>
<organism>
    <name type="scientific">Arabidopsis thaliana</name>
    <name type="common">Mouse-ear cress</name>
    <dbReference type="NCBI Taxonomy" id="3702"/>
    <lineage>
        <taxon>Eukaryota</taxon>
        <taxon>Viridiplantae</taxon>
        <taxon>Streptophyta</taxon>
        <taxon>Embryophyta</taxon>
        <taxon>Tracheophyta</taxon>
        <taxon>Spermatophyta</taxon>
        <taxon>Magnoliopsida</taxon>
        <taxon>eudicotyledons</taxon>
        <taxon>Gunneridae</taxon>
        <taxon>Pentapetalae</taxon>
        <taxon>rosids</taxon>
        <taxon>malvids</taxon>
        <taxon>Brassicales</taxon>
        <taxon>Brassicaceae</taxon>
        <taxon>Camelineae</taxon>
        <taxon>Arabidopsis</taxon>
    </lineage>
</organism>
<name>TAFCL_ARATH</name>
<reference key="1">
    <citation type="journal article" date="2011" name="Plant Cell Physiol.">
        <title>The CKH1/EER4 gene encoding a TAF12-like protein negatively regulates cytokinin sensitivity in Arabidopsis thaliana.</title>
        <authorList>
            <person name="Kubo M."/>
            <person name="Furuta K."/>
            <person name="Demura T."/>
            <person name="Fukuda H."/>
            <person name="Liu Y.G."/>
            <person name="Shibata D."/>
            <person name="Kakimoto T."/>
        </authorList>
    </citation>
    <scope>NUCLEOTIDE SEQUENCE [MRNA]</scope>
    <scope>FUNCTION</scope>
    <scope>SUBCELLULAR LOCATION</scope>
    <scope>TISSUE SPECIFICITY</scope>
    <scope>DISRUPTION PHENOTYPE</scope>
    <scope>INDUCTION BY CYTOKININS</scope>
    <source>
        <strain>cv. Landsberg erecta</strain>
    </source>
</reference>
<reference key="2">
    <citation type="journal article" date="2011" name="Plant Cell Physiol.">
        <title>The CKH2/PKL chromatin remodeling factor negatively regulates cytokinin responses in Arabidopsis calli.</title>
        <authorList>
            <person name="Furuta K."/>
            <person name="Kubo M."/>
            <person name="Sano K."/>
            <person name="Demura T."/>
            <person name="Fukuda H."/>
            <person name="Liu Y.G."/>
            <person name="Shibata D."/>
            <person name="Kakimoto T."/>
        </authorList>
    </citation>
    <scope>INTERACTION WITH PKL</scope>
</reference>
<gene>
    <name type="primary">TAF12B</name>
    <name type="synonym">CKH1</name>
    <name type="synonym">EER4</name>
</gene>
<protein>
    <recommendedName>
        <fullName>Transcription initiation factor TFIID subunit 12b</fullName>
    </recommendedName>
    <alternativeName>
        <fullName>Protein CYTOKININ-HYPERSENSITIVE 1</fullName>
    </alternativeName>
    <alternativeName>
        <fullName>Protein ENHANCED ETHYLENE RESPONSE 4</fullName>
    </alternativeName>
    <alternativeName>
        <fullName>TBP-associated factor 12b</fullName>
        <shortName>AtTAF12b</shortName>
    </alternativeName>
</protein>
<feature type="chain" id="PRO_0000424052" description="Transcription initiation factor TFIID subunit 12b">
    <location>
        <begin position="1"/>
        <end position="681"/>
    </location>
</feature>
<feature type="domain" description="Histone-fold">
    <location>
        <begin position="523"/>
        <end position="596"/>
    </location>
</feature>
<feature type="region of interest" description="Disordered" evidence="2">
    <location>
        <begin position="1"/>
        <end position="171"/>
    </location>
</feature>
<feature type="region of interest" description="Disordered" evidence="2">
    <location>
        <begin position="434"/>
        <end position="453"/>
    </location>
</feature>
<feature type="region of interest" description="Disordered" evidence="2">
    <location>
        <begin position="465"/>
        <end position="520"/>
    </location>
</feature>
<feature type="region of interest" description="Disordered" evidence="2">
    <location>
        <begin position="628"/>
        <end position="681"/>
    </location>
</feature>
<feature type="compositionally biased region" description="Low complexity" evidence="2">
    <location>
        <begin position="1"/>
        <end position="40"/>
    </location>
</feature>
<feature type="compositionally biased region" description="Polar residues" evidence="2">
    <location>
        <begin position="41"/>
        <end position="64"/>
    </location>
</feature>
<feature type="compositionally biased region" description="Low complexity" evidence="2">
    <location>
        <begin position="68"/>
        <end position="88"/>
    </location>
</feature>
<feature type="compositionally biased region" description="Low complexity" evidence="2">
    <location>
        <begin position="97"/>
        <end position="158"/>
    </location>
</feature>
<feature type="compositionally biased region" description="Low complexity" evidence="2">
    <location>
        <begin position="465"/>
        <end position="482"/>
    </location>
</feature>
<feature type="compositionally biased region" description="Polar residues" evidence="2">
    <location>
        <begin position="490"/>
        <end position="503"/>
    </location>
</feature>
<feature type="compositionally biased region" description="Low complexity" evidence="2">
    <location>
        <begin position="504"/>
        <end position="519"/>
    </location>
</feature>
<feature type="compositionally biased region" description="Polar residues" evidence="2">
    <location>
        <begin position="658"/>
        <end position="671"/>
    </location>
</feature>
<keyword id="KW-0010">Activator</keyword>
<keyword id="KW-0539">Nucleus</keyword>
<keyword id="KW-0804">Transcription</keyword>
<keyword id="KW-0805">Transcription regulation</keyword>
<accession>B2C6R6</accession>
<dbReference type="EMBL" id="EU293889">
    <property type="protein sequence ID" value="ACA50283.1"/>
    <property type="molecule type" value="mRNA"/>
</dbReference>
<dbReference type="SMR" id="B2C6R6"/>
<dbReference type="IntAct" id="B2C6R6">
    <property type="interactions" value="2"/>
</dbReference>
<dbReference type="ExpressionAtlas" id="B2C6R6">
    <property type="expression patterns" value="baseline and differential"/>
</dbReference>
<dbReference type="GO" id="GO:0000124">
    <property type="term" value="C:SAGA complex"/>
    <property type="evidence" value="ECO:0007669"/>
    <property type="project" value="InterPro"/>
</dbReference>
<dbReference type="GO" id="GO:0005669">
    <property type="term" value="C:transcription factor TFIID complex"/>
    <property type="evidence" value="ECO:0007669"/>
    <property type="project" value="InterPro"/>
</dbReference>
<dbReference type="GO" id="GO:0046982">
    <property type="term" value="F:protein heterodimerization activity"/>
    <property type="evidence" value="ECO:0007669"/>
    <property type="project" value="InterPro"/>
</dbReference>
<dbReference type="GO" id="GO:0006352">
    <property type="term" value="P:DNA-templated transcription initiation"/>
    <property type="evidence" value="ECO:0007669"/>
    <property type="project" value="InterPro"/>
</dbReference>
<dbReference type="CDD" id="cd07981">
    <property type="entry name" value="HFD_TAF12"/>
    <property type="match status" value="1"/>
</dbReference>
<dbReference type="FunFam" id="1.10.20.10:FF:000011">
    <property type="entry name" value="Transcription initiation factor TFIID subunit 12"/>
    <property type="match status" value="1"/>
</dbReference>
<dbReference type="Gene3D" id="1.10.20.10">
    <property type="entry name" value="Histone, subunit A"/>
    <property type="match status" value="1"/>
</dbReference>
<dbReference type="InterPro" id="IPR009072">
    <property type="entry name" value="Histone-fold"/>
</dbReference>
<dbReference type="InterPro" id="IPR037794">
    <property type="entry name" value="TAF12"/>
</dbReference>
<dbReference type="InterPro" id="IPR003228">
    <property type="entry name" value="TFIID_TAF12_dom"/>
</dbReference>
<dbReference type="PANTHER" id="PTHR12264">
    <property type="entry name" value="TRANSCRIPTION INITIATION FACTOR TFIID SUBUNIT 12"/>
    <property type="match status" value="1"/>
</dbReference>
<dbReference type="PANTHER" id="PTHR12264:SF26">
    <property type="entry name" value="TRANSCRIPTION INITIATION FACTOR TFIID SUBUNIT 12B"/>
    <property type="match status" value="1"/>
</dbReference>
<dbReference type="Pfam" id="PF03847">
    <property type="entry name" value="TFIID_20kDa"/>
    <property type="match status" value="1"/>
</dbReference>
<dbReference type="SUPFAM" id="SSF47113">
    <property type="entry name" value="Histone-fold"/>
    <property type="match status" value="1"/>
</dbReference>
<proteinExistence type="evidence at protein level"/>
<sequence>MAEPIPSSSLSPKSLQSPNPMEPSPASSTPLPSSSSQQQQLMTAPISNSVNSAASPAMTVTTTEGIVIQNNSQPNISSPNPTSSNPPIGAQIPSPSPLSHPSSSLDQQTQTQQLVQQTQQLPQQQQQIMQQISSSPIPQLSPQQQQILQQQHMTSQQIPMSSYQIAQSLQRSPSLSRLSQIQQQQQQQQHQGQYGNVLRQQAGLYGTMNFGGSGSVQQSQQNQQMVNPNMSRAALVGQSGHLPMLNGAAGAAQMNIQPQLLAASPRQKSGMVQGSQFHPGSSGQQLQGMQAMGMMGSLNLTSQMRGNPALYAQQRINPGQMRQQLSQQNALTSPQVQNLQRTSSLAFMNPQLSGLAQNGQAGMMQNSLSQQQWLKQMSGITSPNSFRLQPSQRQALLLQQQQQQLSSPQLHQSSMSLNQQQISQIIQQQQQQSQLGQSQMNQSHSQQQLQQMQQQLQQQPQQQMQQQQQQQQQMQINQQQPSPRMLSHAGQKSVSLTGSQPEATQSGTTTPGGSSSQGTEATNQLLGKRKIQDLVSQVDVHAKLDPDVEDLLLEVADDFIDSVTSFACSLAKHRKSSVLEPKDILLHLEKNLHLTIPGFSSEDKRQTKTVPTDLHKKRLAMVRALLESSKPETNASNSKETMRQAMVNPNGPNHLLRPSQSSEQLVSQTSGPHILQHMTRY</sequence>
<evidence type="ECO:0000250" key="1"/>
<evidence type="ECO:0000256" key="2">
    <source>
        <dbReference type="SAM" id="MobiDB-lite"/>
    </source>
</evidence>
<evidence type="ECO:0000269" key="3">
    <source>
    </source>
</evidence>
<evidence type="ECO:0000269" key="4">
    <source>
    </source>
</evidence>
<evidence type="ECO:0000305" key="5"/>